<name>GGA1_MOUSE</name>
<keyword id="KW-0007">Acetylation</keyword>
<keyword id="KW-0967">Endosome</keyword>
<keyword id="KW-0333">Golgi apparatus</keyword>
<keyword id="KW-0472">Membrane</keyword>
<keyword id="KW-0597">Phosphoprotein</keyword>
<keyword id="KW-0653">Protein transport</keyword>
<keyword id="KW-1185">Reference proteome</keyword>
<keyword id="KW-0813">Transport</keyword>
<keyword id="KW-0832">Ubl conjugation</keyword>
<sequence length="635" mass="69972">MEPAMEPETLEARINRATNPLNKELNWASINSFCEQLNEDFEGPPLATRLLAHKIQSPQEWEAIQALTVLETCMKSCGKRFHDEVGKFRFLNELIKVVSPKYLGSRTSEKVKSKILELLYSWTVCLPEEVKIAEAYQMLKKQGIVKSDPKLPEDAIFPLPPPRPKNVIFEDEEKSKMLARLLKSSHPEDLRAANKLIKEMVQEDQKRMEKISKRVNAIEEVNNNVKLLTEMVMSHSQGAASSSSEDLMKELYQRCERMRPTLFRLASDTEDNDEALAEILQANDNLTQVINLYKQLVRGEEVNGDATASSIPGSTSALLDLSGLDLPPPGTTQPATPTRPGNQSSPEQLSASVSLLDDELMSLGLSDPTPPSGTSSDSVGWDNFQSSDGTESSVPPPAQAPSMDCRPPAQAPPPTSSGLDDLDLLGKTLMQQALPPEAQQVRWEKQQPAPRLTLRDLQSKSSSPSPGAASLLHTTSPEPPGPPPQATPTEFSLTSITVPLESIKPSSILPVTVYDQHGFRVLFHFARDPLPGRSDVLVVVVSMLSTAPQPIRNIVFQSAVPKVMKVRLQPPSGTELPAFNPIVHPSAITQVLLLANPQKEKVRLRYKLIFTMGDQTYNEMGDVDQFPPPETWGSL</sequence>
<gene>
    <name type="primary">Gga1</name>
</gene>
<organism>
    <name type="scientific">Mus musculus</name>
    <name type="common">Mouse</name>
    <dbReference type="NCBI Taxonomy" id="10090"/>
    <lineage>
        <taxon>Eukaryota</taxon>
        <taxon>Metazoa</taxon>
        <taxon>Chordata</taxon>
        <taxon>Craniata</taxon>
        <taxon>Vertebrata</taxon>
        <taxon>Euteleostomi</taxon>
        <taxon>Mammalia</taxon>
        <taxon>Eutheria</taxon>
        <taxon>Euarchontoglires</taxon>
        <taxon>Glires</taxon>
        <taxon>Rodentia</taxon>
        <taxon>Myomorpha</taxon>
        <taxon>Muroidea</taxon>
        <taxon>Muridae</taxon>
        <taxon>Murinae</taxon>
        <taxon>Mus</taxon>
        <taxon>Mus</taxon>
    </lineage>
</organism>
<reference key="1">
    <citation type="journal article" date="2005" name="Science">
        <title>The transcriptional landscape of the mammalian genome.</title>
        <authorList>
            <person name="Carninci P."/>
            <person name="Kasukawa T."/>
            <person name="Katayama S."/>
            <person name="Gough J."/>
            <person name="Frith M.C."/>
            <person name="Maeda N."/>
            <person name="Oyama R."/>
            <person name="Ravasi T."/>
            <person name="Lenhard B."/>
            <person name="Wells C."/>
            <person name="Kodzius R."/>
            <person name="Shimokawa K."/>
            <person name="Bajic V.B."/>
            <person name="Brenner S.E."/>
            <person name="Batalov S."/>
            <person name="Forrest A.R."/>
            <person name="Zavolan M."/>
            <person name="Davis M.J."/>
            <person name="Wilming L.G."/>
            <person name="Aidinis V."/>
            <person name="Allen J.E."/>
            <person name="Ambesi-Impiombato A."/>
            <person name="Apweiler R."/>
            <person name="Aturaliya R.N."/>
            <person name="Bailey T.L."/>
            <person name="Bansal M."/>
            <person name="Baxter L."/>
            <person name="Beisel K.W."/>
            <person name="Bersano T."/>
            <person name="Bono H."/>
            <person name="Chalk A.M."/>
            <person name="Chiu K.P."/>
            <person name="Choudhary V."/>
            <person name="Christoffels A."/>
            <person name="Clutterbuck D.R."/>
            <person name="Crowe M.L."/>
            <person name="Dalla E."/>
            <person name="Dalrymple B.P."/>
            <person name="de Bono B."/>
            <person name="Della Gatta G."/>
            <person name="di Bernardo D."/>
            <person name="Down T."/>
            <person name="Engstrom P."/>
            <person name="Fagiolini M."/>
            <person name="Faulkner G."/>
            <person name="Fletcher C.F."/>
            <person name="Fukushima T."/>
            <person name="Furuno M."/>
            <person name="Futaki S."/>
            <person name="Gariboldi M."/>
            <person name="Georgii-Hemming P."/>
            <person name="Gingeras T.R."/>
            <person name="Gojobori T."/>
            <person name="Green R.E."/>
            <person name="Gustincich S."/>
            <person name="Harbers M."/>
            <person name="Hayashi Y."/>
            <person name="Hensch T.K."/>
            <person name="Hirokawa N."/>
            <person name="Hill D."/>
            <person name="Huminiecki L."/>
            <person name="Iacono M."/>
            <person name="Ikeo K."/>
            <person name="Iwama A."/>
            <person name="Ishikawa T."/>
            <person name="Jakt M."/>
            <person name="Kanapin A."/>
            <person name="Katoh M."/>
            <person name="Kawasawa Y."/>
            <person name="Kelso J."/>
            <person name="Kitamura H."/>
            <person name="Kitano H."/>
            <person name="Kollias G."/>
            <person name="Krishnan S.P."/>
            <person name="Kruger A."/>
            <person name="Kummerfeld S.K."/>
            <person name="Kurochkin I.V."/>
            <person name="Lareau L.F."/>
            <person name="Lazarevic D."/>
            <person name="Lipovich L."/>
            <person name="Liu J."/>
            <person name="Liuni S."/>
            <person name="McWilliam S."/>
            <person name="Madan Babu M."/>
            <person name="Madera M."/>
            <person name="Marchionni L."/>
            <person name="Matsuda H."/>
            <person name="Matsuzawa S."/>
            <person name="Miki H."/>
            <person name="Mignone F."/>
            <person name="Miyake S."/>
            <person name="Morris K."/>
            <person name="Mottagui-Tabar S."/>
            <person name="Mulder N."/>
            <person name="Nakano N."/>
            <person name="Nakauchi H."/>
            <person name="Ng P."/>
            <person name="Nilsson R."/>
            <person name="Nishiguchi S."/>
            <person name="Nishikawa S."/>
            <person name="Nori F."/>
            <person name="Ohara O."/>
            <person name="Okazaki Y."/>
            <person name="Orlando V."/>
            <person name="Pang K.C."/>
            <person name="Pavan W.J."/>
            <person name="Pavesi G."/>
            <person name="Pesole G."/>
            <person name="Petrovsky N."/>
            <person name="Piazza S."/>
            <person name="Reed J."/>
            <person name="Reid J.F."/>
            <person name="Ring B.Z."/>
            <person name="Ringwald M."/>
            <person name="Rost B."/>
            <person name="Ruan Y."/>
            <person name="Salzberg S.L."/>
            <person name="Sandelin A."/>
            <person name="Schneider C."/>
            <person name="Schoenbach C."/>
            <person name="Sekiguchi K."/>
            <person name="Semple C.A."/>
            <person name="Seno S."/>
            <person name="Sessa L."/>
            <person name="Sheng Y."/>
            <person name="Shibata Y."/>
            <person name="Shimada H."/>
            <person name="Shimada K."/>
            <person name="Silva D."/>
            <person name="Sinclair B."/>
            <person name="Sperling S."/>
            <person name="Stupka E."/>
            <person name="Sugiura K."/>
            <person name="Sultana R."/>
            <person name="Takenaka Y."/>
            <person name="Taki K."/>
            <person name="Tammoja K."/>
            <person name="Tan S.L."/>
            <person name="Tang S."/>
            <person name="Taylor M.S."/>
            <person name="Tegner J."/>
            <person name="Teichmann S.A."/>
            <person name="Ueda H.R."/>
            <person name="van Nimwegen E."/>
            <person name="Verardo R."/>
            <person name="Wei C.L."/>
            <person name="Yagi K."/>
            <person name="Yamanishi H."/>
            <person name="Zabarovsky E."/>
            <person name="Zhu S."/>
            <person name="Zimmer A."/>
            <person name="Hide W."/>
            <person name="Bult C."/>
            <person name="Grimmond S.M."/>
            <person name="Teasdale R.D."/>
            <person name="Liu E.T."/>
            <person name="Brusic V."/>
            <person name="Quackenbush J."/>
            <person name="Wahlestedt C."/>
            <person name="Mattick J.S."/>
            <person name="Hume D.A."/>
            <person name="Kai C."/>
            <person name="Sasaki D."/>
            <person name="Tomaru Y."/>
            <person name="Fukuda S."/>
            <person name="Kanamori-Katayama M."/>
            <person name="Suzuki M."/>
            <person name="Aoki J."/>
            <person name="Arakawa T."/>
            <person name="Iida J."/>
            <person name="Imamura K."/>
            <person name="Itoh M."/>
            <person name="Kato T."/>
            <person name="Kawaji H."/>
            <person name="Kawagashira N."/>
            <person name="Kawashima T."/>
            <person name="Kojima M."/>
            <person name="Kondo S."/>
            <person name="Konno H."/>
            <person name="Nakano K."/>
            <person name="Ninomiya N."/>
            <person name="Nishio T."/>
            <person name="Okada M."/>
            <person name="Plessy C."/>
            <person name="Shibata K."/>
            <person name="Shiraki T."/>
            <person name="Suzuki S."/>
            <person name="Tagami M."/>
            <person name="Waki K."/>
            <person name="Watahiki A."/>
            <person name="Okamura-Oho Y."/>
            <person name="Suzuki H."/>
            <person name="Kawai J."/>
            <person name="Hayashizaki Y."/>
        </authorList>
    </citation>
    <scope>NUCLEOTIDE SEQUENCE [LARGE SCALE MRNA]</scope>
    <source>
        <strain>C57BL/6J</strain>
        <strain>NOD</strain>
        <tissue>Adipose tissue</tissue>
    </source>
</reference>
<reference key="2">
    <citation type="journal article" date="2004" name="Genome Res.">
        <title>The status, quality, and expansion of the NIH full-length cDNA project: the Mammalian Gene Collection (MGC).</title>
        <authorList>
            <consortium name="The MGC Project Team"/>
        </authorList>
    </citation>
    <scope>NUCLEOTIDE SEQUENCE [LARGE SCALE MRNA]</scope>
    <source>
        <strain>FVB/N</strain>
        <tissue>Kidney</tissue>
    </source>
</reference>
<reference key="3">
    <citation type="journal article" date="2002" name="Biochem. J.">
        <title>GGA proteins associate with Golgi membranes through interaction between their GGAH domains and ADP-ribosylation factors.</title>
        <authorList>
            <person name="Takatsu H."/>
            <person name="Yoshino K."/>
            <person name="Toda K."/>
            <person name="Nakayama K."/>
        </authorList>
    </citation>
    <scope>INTERACTION WITH ARF1; ARF5 AND ARF6</scope>
</reference>
<reference key="4">
    <citation type="journal article" date="2010" name="Cell">
        <title>A tissue-specific atlas of mouse protein phosphorylation and expression.</title>
        <authorList>
            <person name="Huttlin E.L."/>
            <person name="Jedrychowski M.P."/>
            <person name="Elias J.E."/>
            <person name="Goswami T."/>
            <person name="Rad R."/>
            <person name="Beausoleil S.A."/>
            <person name="Villen J."/>
            <person name="Haas W."/>
            <person name="Sowa M.E."/>
            <person name="Gygi S.P."/>
        </authorList>
    </citation>
    <scope>IDENTIFICATION BY MASS SPECTROMETRY [LARGE SCALE ANALYSIS]</scope>
    <source>
        <tissue>Brain</tissue>
        <tissue>Brown adipose tissue</tissue>
        <tissue>Heart</tissue>
        <tissue>Liver</tissue>
        <tissue>Lung</tissue>
        <tissue>Pancreas</tissue>
        <tissue>Spleen</tissue>
        <tissue>Testis</tissue>
    </source>
</reference>
<reference key="5">
    <citation type="journal article" date="2010" name="Hum. Mol. Genet.">
        <title>Consortin, a trans-Golgi network cargo receptor for the plasma membrane targeting and recycling of connexins.</title>
        <authorList>
            <person name="del Castillo F.J."/>
            <person name="Cohen-Salmon M."/>
            <person name="Charollais A."/>
            <person name="Caille D."/>
            <person name="Lampe P.D."/>
            <person name="Chavrier P."/>
            <person name="Meda P."/>
            <person name="Petit C."/>
        </authorList>
    </citation>
    <scope>INTERACTION WITH CNST</scope>
</reference>
<reference key="6">
    <citation type="journal article" date="2012" name="EMBO J.">
        <title>Structural basis for Arf6-MKLP1 complex formation on the Flemming body responsible for cytokinesis.</title>
        <authorList>
            <person name="Makyio H."/>
            <person name="Ohgi M."/>
            <person name="Takei T."/>
            <person name="Takahashi S."/>
            <person name="Takatsu H."/>
            <person name="Katoh Y."/>
            <person name="Hanai A."/>
            <person name="Ueda T."/>
            <person name="Kanaho Y."/>
            <person name="Xie Y."/>
            <person name="Shin H.W."/>
            <person name="Kamikubo H."/>
            <person name="Kataoka M."/>
            <person name="Kawasaki M."/>
            <person name="Kato R."/>
            <person name="Wakatsuki S."/>
            <person name="Nakayama K."/>
        </authorList>
    </citation>
    <scope>INTERACTION WITH ARF6</scope>
</reference>
<reference key="7">
    <citation type="journal article" date="2014" name="Nat. Commun.">
        <title>Ciliary membrane proteins traffic through the Golgi via a Rabep1/GGA1/Arl3-dependent mechanism.</title>
        <authorList>
            <person name="Kim H."/>
            <person name="Xu H."/>
            <person name="Yao Q."/>
            <person name="Li W."/>
            <person name="Huang Q."/>
            <person name="Outeda P."/>
            <person name="Cebotaru V."/>
            <person name="Chiaravalli M."/>
            <person name="Boletta A."/>
            <person name="Piontek K."/>
            <person name="Germino G.G."/>
            <person name="Weinman E.J."/>
            <person name="Watnick T."/>
            <person name="Qian F."/>
        </authorList>
    </citation>
    <scope>FUNCTION</scope>
    <scope>INTERACTION WITH RABEP1 AND ARL3</scope>
</reference>
<evidence type="ECO:0000250" key="1"/>
<evidence type="ECO:0000250" key="2">
    <source>
        <dbReference type="UniProtKB" id="Q9UJY5"/>
    </source>
</evidence>
<evidence type="ECO:0000255" key="3">
    <source>
        <dbReference type="PROSITE-ProRule" id="PRU00093"/>
    </source>
</evidence>
<evidence type="ECO:0000255" key="4">
    <source>
        <dbReference type="PROSITE-ProRule" id="PRU00218"/>
    </source>
</evidence>
<evidence type="ECO:0000255" key="5">
    <source>
        <dbReference type="PROSITE-ProRule" id="PRU00373"/>
    </source>
</evidence>
<evidence type="ECO:0000256" key="6">
    <source>
        <dbReference type="SAM" id="MobiDB-lite"/>
    </source>
</evidence>
<evidence type="ECO:0000269" key="7">
    <source>
    </source>
</evidence>
<evidence type="ECO:0000269" key="8">
    <source>
    </source>
</evidence>
<evidence type="ECO:0000269" key="9">
    <source>
    </source>
</evidence>
<evidence type="ECO:0000269" key="10">
    <source>
    </source>
</evidence>
<evidence type="ECO:0000305" key="11"/>
<feature type="chain" id="PRO_0000212681" description="ADP-ribosylation factor-binding protein GGA1">
    <location>
        <begin position="1"/>
        <end position="635"/>
    </location>
</feature>
<feature type="domain" description="VHS" evidence="4">
    <location>
        <begin position="17"/>
        <end position="147"/>
    </location>
</feature>
<feature type="domain" description="GAT" evidence="5">
    <location>
        <begin position="171"/>
        <end position="298"/>
    </location>
</feature>
<feature type="domain" description="GAE" evidence="3">
    <location>
        <begin position="506"/>
        <end position="627"/>
    </location>
</feature>
<feature type="region of interest" description="Interaction with ARF3" evidence="1">
    <location>
        <begin position="114"/>
        <end position="273"/>
    </location>
</feature>
<feature type="region of interest" description="Unstructured hinge">
    <location>
        <begin position="299"/>
        <end position="505"/>
    </location>
</feature>
<feature type="region of interest" description="Disordered" evidence="6">
    <location>
        <begin position="305"/>
        <end position="349"/>
    </location>
</feature>
<feature type="region of interest" description="Disordered" evidence="6">
    <location>
        <begin position="362"/>
        <end position="422"/>
    </location>
</feature>
<feature type="region of interest" description="Disordered" evidence="6">
    <location>
        <begin position="455"/>
        <end position="490"/>
    </location>
</feature>
<feature type="short sequence motif" description="Autoinhibitory" evidence="1">
    <location>
        <begin position="357"/>
        <end position="361"/>
    </location>
</feature>
<feature type="compositionally biased region" description="Low complexity" evidence="6">
    <location>
        <begin position="313"/>
        <end position="325"/>
    </location>
</feature>
<feature type="compositionally biased region" description="Polar residues" evidence="6">
    <location>
        <begin position="383"/>
        <end position="393"/>
    </location>
</feature>
<feature type="compositionally biased region" description="Low complexity" evidence="6">
    <location>
        <begin position="459"/>
        <end position="476"/>
    </location>
</feature>
<feature type="compositionally biased region" description="Pro residues" evidence="6">
    <location>
        <begin position="477"/>
        <end position="486"/>
    </location>
</feature>
<feature type="modified residue" description="N-acetylmethionine" evidence="2">
    <location>
        <position position="1"/>
    </location>
</feature>
<feature type="modified residue" description="Phosphoserine" evidence="2">
    <location>
        <position position="185"/>
    </location>
</feature>
<feature type="modified residue" description="Phosphoserine" evidence="2">
    <location>
        <position position="354"/>
    </location>
</feature>
<feature type="modified residue" description="Phosphoserine" evidence="2">
    <location>
        <position position="417"/>
    </location>
</feature>
<accession>Q8R0H9</accession>
<accession>Q3U2N1</accession>
<proteinExistence type="evidence at protein level"/>
<comment type="function">
    <text evidence="2 10">Plays a role in protein sorting and trafficking between the trans-Golgi network (TGN) and endosomes (PubMed:25405894). Mediates the ARF-dependent recruitment of clathrin to the TGN and binds ubiquitinated proteins and membrane cargo molecules with a cytosolic acidic cluster-dileucine (DXXLL) motif. Mediates export of the GPCR receptor ADRA2B to the cell surface (By similarity). Required for targeting PKD1:PKD2 complex from the trans-Golgi network to the cilium membrane (PubMed:25405894). Regulates retrograde transport of proteins such as phosphorylated form of BACE1 from endosomes to the trans-Golgi network (By similarity).</text>
</comment>
<comment type="subunit">
    <text evidence="2 7 8 9 10">Monomer. Interacts with GGA2 and GGA3 (By similarity). Binds to clathrin and activated ARFs, including ARF1, ARF5 and ARF6 (PubMed:11950392, PubMed:22522702). Interacts with RABEP1 and RABGEF1 (PubMed:25405894). Interacts with the type-I membrane proteins LRP3, M6PR/CD-MPR and IGF2R/CI-MPR. Interacts (via N-terminal VHS domain) with SORL1/sorLA and SORT1 (via C-terminal cytosolic domain) (By similarity). Interacts with EPN4. Interacts with CCDC91 (By similarity). Interacts with HEATR5B/p200a (By similarity). Interacts with SYNRG/gamma-synergin (By similarity). Interacts (via GAE doamin) with NECAP1 and NECAP2 (By similarity). Interacts (via GAE domain) with AFTPH/aftiphilin (By similarity). Interacts with TSG101 and UBC. Interacts with RNF11. Interacts (via VHS domain) with BACE1 (via DXXLL motif); the interaction highly increases when BACE1 is phosphorylated at 'Ser-498' (By similarity). Interacts with CNST (PubMed:19864490). Interacts with ADRA2B (By similarity). Interacts with ARL3; the interaction recruits, in collaboration with RABEP1, PKD1:PKD2 complex to trans-Golgi network and is required for ciliary targeting (PubMed:25405894).</text>
</comment>
<comment type="interaction">
    <interactant intactId="EBI-2616212">
        <id>Q8R0H9</id>
    </interactant>
    <interactant intactId="EBI-2615407">
        <id>Q8CBC4-3</id>
        <label>Cnst</label>
    </interactant>
    <organismsDiffer>false</organismsDiffer>
    <experiments>2</experiments>
</comment>
<comment type="subcellular location">
    <subcellularLocation>
        <location evidence="2">Golgi apparatus</location>
        <location evidence="2">trans-Golgi network membrane</location>
        <topology evidence="2">Peripheral membrane protein</topology>
    </subcellularLocation>
    <subcellularLocation>
        <location evidence="2">Endosome membrane</location>
        <topology evidence="2">Peripheral membrane protein</topology>
    </subcellularLocation>
    <subcellularLocation>
        <location evidence="2">Early endosome membrane</location>
        <topology evidence="2">Peripheral membrane protein</topology>
    </subcellularLocation>
</comment>
<comment type="domain">
    <text>The VHS domain functions as a recognition module for sorting signals composed of an acidic cluster followed by two leucines (DXXLL motif).</text>
</comment>
<comment type="domain">
    <text evidence="2">The GAT domain is responsible for interaction with ARF-GTP, UBC and RABEP1. Required for recruitment to the TGN it prevents ARF-GTP hydrolysis.</text>
</comment>
<comment type="domain">
    <text evidence="2">The unstructured hinge region contains clathrin-binding but no autoinhibitory (DXXLL) motifs.</text>
</comment>
<comment type="domain">
    <text>The GAE domain binds accessory proteins regulating GGAs function.</text>
</comment>
<comment type="PTM">
    <text>Phosphorylated by CK2 and dephosphorylated by PP2A. Phosphorylation of GGA1 allows the internal DXXLL motif to bind the VHS domain and to inhibit the recognition of cargo signals.</text>
</comment>
<comment type="PTM">
    <text evidence="2">Ubiquitinated.</text>
</comment>
<comment type="similarity">
    <text evidence="11">Belongs to the GGA protein family.</text>
</comment>
<protein>
    <recommendedName>
        <fullName>ADP-ribosylation factor-binding protein GGA1</fullName>
    </recommendedName>
    <alternativeName>
        <fullName>Gamma-adaptin-related protein 1</fullName>
    </alternativeName>
    <alternativeName>
        <fullName>Golgi-localized, gamma ear-containing, ARF-binding protein 1</fullName>
    </alternativeName>
</protein>
<dbReference type="EMBL" id="AK080881">
    <property type="protein sequence ID" value="BAC38058.1"/>
    <property type="molecule type" value="mRNA"/>
</dbReference>
<dbReference type="EMBL" id="AK155195">
    <property type="protein sequence ID" value="BAE33109.1"/>
    <property type="molecule type" value="mRNA"/>
</dbReference>
<dbReference type="EMBL" id="BC026802">
    <property type="protein sequence ID" value="AAH26802.1"/>
    <property type="molecule type" value="mRNA"/>
</dbReference>
<dbReference type="CCDS" id="CCDS27625.1"/>
<dbReference type="RefSeq" id="NP_666041.1">
    <property type="nucleotide sequence ID" value="NM_145929.2"/>
</dbReference>
<dbReference type="SMR" id="Q8R0H9"/>
<dbReference type="BioGRID" id="222979">
    <property type="interactions" value="16"/>
</dbReference>
<dbReference type="ELM" id="Q8R0H9"/>
<dbReference type="FunCoup" id="Q8R0H9">
    <property type="interactions" value="3365"/>
</dbReference>
<dbReference type="IntAct" id="Q8R0H9">
    <property type="interactions" value="2"/>
</dbReference>
<dbReference type="STRING" id="10090.ENSMUSP00000035992"/>
<dbReference type="GlyGen" id="Q8R0H9">
    <property type="glycosylation" value="2 sites"/>
</dbReference>
<dbReference type="iPTMnet" id="Q8R0H9"/>
<dbReference type="PhosphoSitePlus" id="Q8R0H9"/>
<dbReference type="SwissPalm" id="Q8R0H9"/>
<dbReference type="PaxDb" id="10090-ENSMUSP00000035992"/>
<dbReference type="PeptideAtlas" id="Q8R0H9"/>
<dbReference type="ProteomicsDB" id="268872"/>
<dbReference type="Pumba" id="Q8R0H9"/>
<dbReference type="Antibodypedia" id="12029">
    <property type="antibodies" value="235 antibodies from 29 providers"/>
</dbReference>
<dbReference type="DNASU" id="106039"/>
<dbReference type="Ensembl" id="ENSMUST00000041587.8">
    <property type="protein sequence ID" value="ENSMUSP00000035992.8"/>
    <property type="gene ID" value="ENSMUSG00000033128.10"/>
</dbReference>
<dbReference type="GeneID" id="106039"/>
<dbReference type="KEGG" id="mmu:106039"/>
<dbReference type="UCSC" id="uc007wrn.2">
    <property type="organism name" value="mouse"/>
</dbReference>
<dbReference type="AGR" id="MGI:2146207"/>
<dbReference type="CTD" id="26088"/>
<dbReference type="MGI" id="MGI:2146207">
    <property type="gene designation" value="Gga1"/>
</dbReference>
<dbReference type="VEuPathDB" id="HostDB:ENSMUSG00000033128"/>
<dbReference type="eggNOG" id="KOG1086">
    <property type="taxonomic scope" value="Eukaryota"/>
</dbReference>
<dbReference type="GeneTree" id="ENSGT00940000156448"/>
<dbReference type="HOGENOM" id="CLU_015010_0_0_1"/>
<dbReference type="InParanoid" id="Q8R0H9"/>
<dbReference type="OMA" id="PDNYEPN"/>
<dbReference type="OrthoDB" id="447025at2759"/>
<dbReference type="PhylomeDB" id="Q8R0H9"/>
<dbReference type="TreeFam" id="TF318574"/>
<dbReference type="BioGRID-ORCS" id="106039">
    <property type="hits" value="5 hits in 77 CRISPR screens"/>
</dbReference>
<dbReference type="ChiTaRS" id="Gga1">
    <property type="organism name" value="mouse"/>
</dbReference>
<dbReference type="PRO" id="PR:Q8R0H9"/>
<dbReference type="Proteomes" id="UP000000589">
    <property type="component" value="Chromosome 15"/>
</dbReference>
<dbReference type="RNAct" id="Q8R0H9">
    <property type="molecule type" value="protein"/>
</dbReference>
<dbReference type="Bgee" id="ENSMUSG00000033128">
    <property type="expression patterns" value="Expressed in granulocyte and 218 other cell types or tissues"/>
</dbReference>
<dbReference type="ExpressionAtlas" id="Q8R0H9">
    <property type="expression patterns" value="baseline and differential"/>
</dbReference>
<dbReference type="GO" id="GO:0005829">
    <property type="term" value="C:cytosol"/>
    <property type="evidence" value="ECO:0007669"/>
    <property type="project" value="GOC"/>
</dbReference>
<dbReference type="GO" id="GO:0005769">
    <property type="term" value="C:early endosome"/>
    <property type="evidence" value="ECO:0000250"/>
    <property type="project" value="UniProtKB"/>
</dbReference>
<dbReference type="GO" id="GO:0031901">
    <property type="term" value="C:early endosome membrane"/>
    <property type="evidence" value="ECO:0007669"/>
    <property type="project" value="UniProtKB-SubCell"/>
</dbReference>
<dbReference type="GO" id="GO:0005654">
    <property type="term" value="C:nucleoplasm"/>
    <property type="evidence" value="ECO:0007669"/>
    <property type="project" value="Ensembl"/>
</dbReference>
<dbReference type="GO" id="GO:0032991">
    <property type="term" value="C:protein-containing complex"/>
    <property type="evidence" value="ECO:0007669"/>
    <property type="project" value="Ensembl"/>
</dbReference>
<dbReference type="GO" id="GO:0005802">
    <property type="term" value="C:trans-Golgi network"/>
    <property type="evidence" value="ECO:0007669"/>
    <property type="project" value="InterPro"/>
</dbReference>
<dbReference type="GO" id="GO:0035091">
    <property type="term" value="F:phosphatidylinositol binding"/>
    <property type="evidence" value="ECO:0007669"/>
    <property type="project" value="InterPro"/>
</dbReference>
<dbReference type="GO" id="GO:0031267">
    <property type="term" value="F:small GTPase binding"/>
    <property type="evidence" value="ECO:0007669"/>
    <property type="project" value="Ensembl"/>
</dbReference>
<dbReference type="GO" id="GO:0043130">
    <property type="term" value="F:ubiquitin binding"/>
    <property type="evidence" value="ECO:0007669"/>
    <property type="project" value="InterPro"/>
</dbReference>
<dbReference type="GO" id="GO:0043001">
    <property type="term" value="P:Golgi to plasma membrane protein transport"/>
    <property type="evidence" value="ECO:0000250"/>
    <property type="project" value="UniProtKB"/>
</dbReference>
<dbReference type="GO" id="GO:0006893">
    <property type="term" value="P:Golgi to plasma membrane transport"/>
    <property type="evidence" value="ECO:0000315"/>
    <property type="project" value="UniProtKB"/>
</dbReference>
<dbReference type="GO" id="GO:0006886">
    <property type="term" value="P:intracellular protein transport"/>
    <property type="evidence" value="ECO:0000250"/>
    <property type="project" value="UniProtKB"/>
</dbReference>
<dbReference type="GO" id="GO:0045732">
    <property type="term" value="P:positive regulation of protein catabolic process"/>
    <property type="evidence" value="ECO:0000316"/>
    <property type="project" value="MGI"/>
</dbReference>
<dbReference type="GO" id="GO:0030163">
    <property type="term" value="P:protein catabolic process"/>
    <property type="evidence" value="ECO:0000316"/>
    <property type="project" value="MGI"/>
</dbReference>
<dbReference type="GO" id="GO:0008104">
    <property type="term" value="P:protein localization"/>
    <property type="evidence" value="ECO:0000250"/>
    <property type="project" value="UniProtKB"/>
</dbReference>
<dbReference type="GO" id="GO:0034394">
    <property type="term" value="P:protein localization to cell surface"/>
    <property type="evidence" value="ECO:0000250"/>
    <property type="project" value="UniProtKB"/>
</dbReference>
<dbReference type="GO" id="GO:1903441">
    <property type="term" value="P:protein localization to ciliary membrane"/>
    <property type="evidence" value="ECO:0000315"/>
    <property type="project" value="UniProtKB"/>
</dbReference>
<dbReference type="GO" id="GO:0042147">
    <property type="term" value="P:retrograde transport, endosome to Golgi"/>
    <property type="evidence" value="ECO:0000250"/>
    <property type="project" value="UniProtKB"/>
</dbReference>
<dbReference type="CDD" id="cd14239">
    <property type="entry name" value="GAT_GGA1_GGA2"/>
    <property type="match status" value="1"/>
</dbReference>
<dbReference type="CDD" id="cd17009">
    <property type="entry name" value="VHS_GGA1"/>
    <property type="match status" value="1"/>
</dbReference>
<dbReference type="FunFam" id="2.60.40.1230:FF:000001">
    <property type="entry name" value="ADP-ribosylation factor-binding protein GGA1 isoform 1"/>
    <property type="match status" value="1"/>
</dbReference>
<dbReference type="FunFam" id="1.20.5.170:FF:000023">
    <property type="entry name" value="ADP-ribosylation factor-binding protein GGA3 isoform X1"/>
    <property type="match status" value="1"/>
</dbReference>
<dbReference type="FunFam" id="1.25.40.90:FF:000011">
    <property type="entry name" value="ADP-ribosylation factor-binding protein GGA3 isoform X1"/>
    <property type="match status" value="1"/>
</dbReference>
<dbReference type="FunFam" id="1.20.58.160:FF:000002">
    <property type="entry name" value="Golgi-associated, gamma adaptin ear containing, ARF binding protein 2"/>
    <property type="match status" value="1"/>
</dbReference>
<dbReference type="Gene3D" id="1.20.5.170">
    <property type="match status" value="1"/>
</dbReference>
<dbReference type="Gene3D" id="1.20.58.160">
    <property type="match status" value="1"/>
</dbReference>
<dbReference type="Gene3D" id="1.25.40.90">
    <property type="match status" value="1"/>
</dbReference>
<dbReference type="Gene3D" id="2.60.40.1230">
    <property type="match status" value="1"/>
</dbReference>
<dbReference type="InterPro" id="IPR008152">
    <property type="entry name" value="Clathrin_a/b/g-adaptin_app_Ig"/>
</dbReference>
<dbReference type="InterPro" id="IPR013041">
    <property type="entry name" value="Clathrin_app_Ig-like_sf"/>
</dbReference>
<dbReference type="InterPro" id="IPR008942">
    <property type="entry name" value="ENTH_VHS"/>
</dbReference>
<dbReference type="InterPro" id="IPR008153">
    <property type="entry name" value="GAE_dom"/>
</dbReference>
<dbReference type="InterPro" id="IPR004152">
    <property type="entry name" value="GAT_dom"/>
</dbReference>
<dbReference type="InterPro" id="IPR038425">
    <property type="entry name" value="GAT_sf"/>
</dbReference>
<dbReference type="InterPro" id="IPR027422">
    <property type="entry name" value="GGA1-3"/>
</dbReference>
<dbReference type="InterPro" id="IPR041198">
    <property type="entry name" value="GGA_N-GAT"/>
</dbReference>
<dbReference type="InterPro" id="IPR002014">
    <property type="entry name" value="VHS_dom"/>
</dbReference>
<dbReference type="PANTHER" id="PTHR45905:SF4">
    <property type="entry name" value="ADP-RIBOSYLATION FACTOR-BINDING PROTEIN GGA1"/>
    <property type="match status" value="1"/>
</dbReference>
<dbReference type="PANTHER" id="PTHR45905">
    <property type="entry name" value="GOLGI-LOCALIZED, GAMMA-ADAPTIN EAR CONTAINING, ARF BINDING PROTEIN"/>
    <property type="match status" value="1"/>
</dbReference>
<dbReference type="Pfam" id="PF02883">
    <property type="entry name" value="Alpha_adaptinC2"/>
    <property type="match status" value="1"/>
</dbReference>
<dbReference type="Pfam" id="PF03127">
    <property type="entry name" value="GAT"/>
    <property type="match status" value="1"/>
</dbReference>
<dbReference type="Pfam" id="PF18308">
    <property type="entry name" value="GGA_N-GAT"/>
    <property type="match status" value="1"/>
</dbReference>
<dbReference type="Pfam" id="PF00790">
    <property type="entry name" value="VHS"/>
    <property type="match status" value="1"/>
</dbReference>
<dbReference type="SMART" id="SM00809">
    <property type="entry name" value="Alpha_adaptinC2"/>
    <property type="match status" value="1"/>
</dbReference>
<dbReference type="SMART" id="SM00288">
    <property type="entry name" value="VHS"/>
    <property type="match status" value="1"/>
</dbReference>
<dbReference type="SUPFAM" id="SSF49348">
    <property type="entry name" value="Clathrin adaptor appendage domain"/>
    <property type="match status" value="1"/>
</dbReference>
<dbReference type="SUPFAM" id="SSF48464">
    <property type="entry name" value="ENTH/VHS domain"/>
    <property type="match status" value="1"/>
</dbReference>
<dbReference type="SUPFAM" id="SSF89009">
    <property type="entry name" value="GAT-like domain"/>
    <property type="match status" value="1"/>
</dbReference>
<dbReference type="PROSITE" id="PS50180">
    <property type="entry name" value="GAE"/>
    <property type="match status" value="1"/>
</dbReference>
<dbReference type="PROSITE" id="PS50909">
    <property type="entry name" value="GAT"/>
    <property type="match status" value="1"/>
</dbReference>
<dbReference type="PROSITE" id="PS50179">
    <property type="entry name" value="VHS"/>
    <property type="match status" value="1"/>
</dbReference>